<name>RS6_HELAH</name>
<proteinExistence type="inferred from homology"/>
<feature type="chain" id="PRO_1000005274" description="Small ribosomal subunit protein bS6">
    <location>
        <begin position="1"/>
        <end position="142"/>
    </location>
</feature>
<feature type="region of interest" description="Disordered" evidence="2">
    <location>
        <begin position="110"/>
        <end position="142"/>
    </location>
</feature>
<accession>Q17Z31</accession>
<reference key="1">
    <citation type="journal article" date="2006" name="PLoS Genet.">
        <title>Who ate whom? Adaptive Helicobacter genomic changes that accompanied a host jump from early humans to large felines.</title>
        <authorList>
            <person name="Eppinger M."/>
            <person name="Baar C."/>
            <person name="Linz B."/>
            <person name="Raddatz G."/>
            <person name="Lanz C."/>
            <person name="Keller H."/>
            <person name="Morelli G."/>
            <person name="Gressmann H."/>
            <person name="Achtman M."/>
            <person name="Schuster S.C."/>
        </authorList>
    </citation>
    <scope>NUCLEOTIDE SEQUENCE [LARGE SCALE GENOMIC DNA]</scope>
    <source>
        <strain>Sheeba</strain>
    </source>
</reference>
<keyword id="KW-0687">Ribonucleoprotein</keyword>
<keyword id="KW-0689">Ribosomal protein</keyword>
<keyword id="KW-0694">RNA-binding</keyword>
<keyword id="KW-0699">rRNA-binding</keyword>
<sequence length="142" mass="17007">MRHYETMFILKPTLVEEEIKSKIEFYKEVITKHNGVIETSLDMGMRNLAYEIKKHKRGYYYVMYFKAEPSMILELERLYRINEDVLRFIVIKYDSKKEVEAWHALVDRANKKPSHAKEKHEKTEHAHSHHTEEAGSKESHSE</sequence>
<dbReference type="EMBL" id="AM260522">
    <property type="protein sequence ID" value="CAJ99095.1"/>
    <property type="molecule type" value="Genomic_DNA"/>
</dbReference>
<dbReference type="RefSeq" id="WP_011577210.1">
    <property type="nucleotide sequence ID" value="NC_008229.1"/>
</dbReference>
<dbReference type="SMR" id="Q17Z31"/>
<dbReference type="STRING" id="382638.Hac_0247"/>
<dbReference type="GeneID" id="31757762"/>
<dbReference type="KEGG" id="hac:Hac_0247"/>
<dbReference type="eggNOG" id="COG0360">
    <property type="taxonomic scope" value="Bacteria"/>
</dbReference>
<dbReference type="HOGENOM" id="CLU_113441_4_1_7"/>
<dbReference type="OrthoDB" id="9812702at2"/>
<dbReference type="BioCyc" id="HACI382638:HAC_RS01080-MONOMER"/>
<dbReference type="Proteomes" id="UP000000775">
    <property type="component" value="Chromosome"/>
</dbReference>
<dbReference type="GO" id="GO:0022627">
    <property type="term" value="C:cytosolic small ribosomal subunit"/>
    <property type="evidence" value="ECO:0007669"/>
    <property type="project" value="TreeGrafter"/>
</dbReference>
<dbReference type="GO" id="GO:0070181">
    <property type="term" value="F:small ribosomal subunit rRNA binding"/>
    <property type="evidence" value="ECO:0007669"/>
    <property type="project" value="TreeGrafter"/>
</dbReference>
<dbReference type="GO" id="GO:0003735">
    <property type="term" value="F:structural constituent of ribosome"/>
    <property type="evidence" value="ECO:0007669"/>
    <property type="project" value="InterPro"/>
</dbReference>
<dbReference type="GO" id="GO:0006412">
    <property type="term" value="P:translation"/>
    <property type="evidence" value="ECO:0007669"/>
    <property type="project" value="UniProtKB-UniRule"/>
</dbReference>
<dbReference type="CDD" id="cd00473">
    <property type="entry name" value="bS6"/>
    <property type="match status" value="1"/>
</dbReference>
<dbReference type="FunFam" id="3.30.70.60:FF:000010">
    <property type="entry name" value="30S ribosomal protein S6"/>
    <property type="match status" value="1"/>
</dbReference>
<dbReference type="Gene3D" id="3.30.70.60">
    <property type="match status" value="1"/>
</dbReference>
<dbReference type="HAMAP" id="MF_00360">
    <property type="entry name" value="Ribosomal_bS6"/>
    <property type="match status" value="1"/>
</dbReference>
<dbReference type="InterPro" id="IPR000529">
    <property type="entry name" value="Ribosomal_bS6"/>
</dbReference>
<dbReference type="InterPro" id="IPR020815">
    <property type="entry name" value="Ribosomal_bS6_CS"/>
</dbReference>
<dbReference type="InterPro" id="IPR035980">
    <property type="entry name" value="Ribosomal_bS6_sf"/>
</dbReference>
<dbReference type="InterPro" id="IPR020814">
    <property type="entry name" value="Ribosomal_S6_plastid/chlpt"/>
</dbReference>
<dbReference type="InterPro" id="IPR014717">
    <property type="entry name" value="Transl_elong_EF1B/ribsomal_bS6"/>
</dbReference>
<dbReference type="NCBIfam" id="TIGR00166">
    <property type="entry name" value="S6"/>
    <property type="match status" value="1"/>
</dbReference>
<dbReference type="PANTHER" id="PTHR21011">
    <property type="entry name" value="MITOCHONDRIAL 28S RIBOSOMAL PROTEIN S6"/>
    <property type="match status" value="1"/>
</dbReference>
<dbReference type="PANTHER" id="PTHR21011:SF1">
    <property type="entry name" value="SMALL RIBOSOMAL SUBUNIT PROTEIN BS6M"/>
    <property type="match status" value="1"/>
</dbReference>
<dbReference type="Pfam" id="PF01250">
    <property type="entry name" value="Ribosomal_S6"/>
    <property type="match status" value="1"/>
</dbReference>
<dbReference type="SUPFAM" id="SSF54995">
    <property type="entry name" value="Ribosomal protein S6"/>
    <property type="match status" value="1"/>
</dbReference>
<dbReference type="PROSITE" id="PS01048">
    <property type="entry name" value="RIBOSOMAL_S6"/>
    <property type="match status" value="1"/>
</dbReference>
<gene>
    <name evidence="1" type="primary">rpsF</name>
    <name type="ordered locus">Hac_0247</name>
</gene>
<evidence type="ECO:0000255" key="1">
    <source>
        <dbReference type="HAMAP-Rule" id="MF_00360"/>
    </source>
</evidence>
<evidence type="ECO:0000256" key="2">
    <source>
        <dbReference type="SAM" id="MobiDB-lite"/>
    </source>
</evidence>
<evidence type="ECO:0000305" key="3"/>
<organism>
    <name type="scientific">Helicobacter acinonychis (strain Sheeba)</name>
    <dbReference type="NCBI Taxonomy" id="382638"/>
    <lineage>
        <taxon>Bacteria</taxon>
        <taxon>Pseudomonadati</taxon>
        <taxon>Campylobacterota</taxon>
        <taxon>Epsilonproteobacteria</taxon>
        <taxon>Campylobacterales</taxon>
        <taxon>Helicobacteraceae</taxon>
        <taxon>Helicobacter</taxon>
    </lineage>
</organism>
<protein>
    <recommendedName>
        <fullName evidence="1">Small ribosomal subunit protein bS6</fullName>
    </recommendedName>
    <alternativeName>
        <fullName evidence="3">30S ribosomal protein S6</fullName>
    </alternativeName>
</protein>
<comment type="function">
    <text evidence="1">Binds together with bS18 to 16S ribosomal RNA.</text>
</comment>
<comment type="similarity">
    <text evidence="1">Belongs to the bacterial ribosomal protein bS6 family.</text>
</comment>